<proteinExistence type="inferred from homology"/>
<gene>
    <name evidence="1" type="primary">rpsO</name>
    <name type="ordered locus">Swoo_3558</name>
</gene>
<accession>B1KRQ7</accession>
<sequence>MSLNAEQTASILAEFGRCENDTGSTEVQVALLTAQINHLQGHFKEHKHDHHSRRGLLRMVNTRRKLLAYLKRTENVRYQELIKKLGLRR</sequence>
<keyword id="KW-1185">Reference proteome</keyword>
<keyword id="KW-0687">Ribonucleoprotein</keyword>
<keyword id="KW-0689">Ribosomal protein</keyword>
<keyword id="KW-0694">RNA-binding</keyword>
<keyword id="KW-0699">rRNA-binding</keyword>
<comment type="function">
    <text evidence="1">One of the primary rRNA binding proteins, it binds directly to 16S rRNA where it helps nucleate assembly of the platform of the 30S subunit by binding and bridging several RNA helices of the 16S rRNA.</text>
</comment>
<comment type="function">
    <text evidence="1">Forms an intersubunit bridge (bridge B4) with the 23S rRNA of the 50S subunit in the ribosome.</text>
</comment>
<comment type="subunit">
    <text evidence="1">Part of the 30S ribosomal subunit. Forms a bridge to the 50S subunit in the 70S ribosome, contacting the 23S rRNA.</text>
</comment>
<comment type="similarity">
    <text evidence="1">Belongs to the universal ribosomal protein uS15 family.</text>
</comment>
<dbReference type="EMBL" id="CP000961">
    <property type="protein sequence ID" value="ACA87822.1"/>
    <property type="molecule type" value="Genomic_DNA"/>
</dbReference>
<dbReference type="RefSeq" id="WP_012326155.1">
    <property type="nucleotide sequence ID" value="NC_010506.1"/>
</dbReference>
<dbReference type="SMR" id="B1KRQ7"/>
<dbReference type="STRING" id="392500.Swoo_3558"/>
<dbReference type="KEGG" id="swd:Swoo_3558"/>
<dbReference type="eggNOG" id="COG0184">
    <property type="taxonomic scope" value="Bacteria"/>
</dbReference>
<dbReference type="HOGENOM" id="CLU_148518_0_0_6"/>
<dbReference type="Proteomes" id="UP000002168">
    <property type="component" value="Chromosome"/>
</dbReference>
<dbReference type="GO" id="GO:0022627">
    <property type="term" value="C:cytosolic small ribosomal subunit"/>
    <property type="evidence" value="ECO:0007669"/>
    <property type="project" value="TreeGrafter"/>
</dbReference>
<dbReference type="GO" id="GO:0019843">
    <property type="term" value="F:rRNA binding"/>
    <property type="evidence" value="ECO:0007669"/>
    <property type="project" value="UniProtKB-UniRule"/>
</dbReference>
<dbReference type="GO" id="GO:0003735">
    <property type="term" value="F:structural constituent of ribosome"/>
    <property type="evidence" value="ECO:0007669"/>
    <property type="project" value="InterPro"/>
</dbReference>
<dbReference type="GO" id="GO:0006412">
    <property type="term" value="P:translation"/>
    <property type="evidence" value="ECO:0007669"/>
    <property type="project" value="UniProtKB-UniRule"/>
</dbReference>
<dbReference type="CDD" id="cd00353">
    <property type="entry name" value="Ribosomal_S15p_S13e"/>
    <property type="match status" value="1"/>
</dbReference>
<dbReference type="FunFam" id="1.10.287.10:FF:000002">
    <property type="entry name" value="30S ribosomal protein S15"/>
    <property type="match status" value="1"/>
</dbReference>
<dbReference type="Gene3D" id="6.10.250.3130">
    <property type="match status" value="1"/>
</dbReference>
<dbReference type="Gene3D" id="1.10.287.10">
    <property type="entry name" value="S15/NS1, RNA-binding"/>
    <property type="match status" value="1"/>
</dbReference>
<dbReference type="HAMAP" id="MF_01343_B">
    <property type="entry name" value="Ribosomal_uS15_B"/>
    <property type="match status" value="1"/>
</dbReference>
<dbReference type="InterPro" id="IPR000589">
    <property type="entry name" value="Ribosomal_uS15"/>
</dbReference>
<dbReference type="InterPro" id="IPR005290">
    <property type="entry name" value="Ribosomal_uS15_bac-type"/>
</dbReference>
<dbReference type="InterPro" id="IPR009068">
    <property type="entry name" value="uS15_NS1_RNA-bd_sf"/>
</dbReference>
<dbReference type="NCBIfam" id="TIGR00952">
    <property type="entry name" value="S15_bact"/>
    <property type="match status" value="1"/>
</dbReference>
<dbReference type="PANTHER" id="PTHR23321">
    <property type="entry name" value="RIBOSOMAL PROTEIN S15, BACTERIAL AND ORGANELLAR"/>
    <property type="match status" value="1"/>
</dbReference>
<dbReference type="PANTHER" id="PTHR23321:SF26">
    <property type="entry name" value="SMALL RIBOSOMAL SUBUNIT PROTEIN US15M"/>
    <property type="match status" value="1"/>
</dbReference>
<dbReference type="Pfam" id="PF00312">
    <property type="entry name" value="Ribosomal_S15"/>
    <property type="match status" value="1"/>
</dbReference>
<dbReference type="SMART" id="SM01387">
    <property type="entry name" value="Ribosomal_S15"/>
    <property type="match status" value="1"/>
</dbReference>
<dbReference type="SUPFAM" id="SSF47060">
    <property type="entry name" value="S15/NS1 RNA-binding domain"/>
    <property type="match status" value="1"/>
</dbReference>
<dbReference type="PROSITE" id="PS00362">
    <property type="entry name" value="RIBOSOMAL_S15"/>
    <property type="match status" value="1"/>
</dbReference>
<organism>
    <name type="scientific">Shewanella woodyi (strain ATCC 51908 / MS32)</name>
    <dbReference type="NCBI Taxonomy" id="392500"/>
    <lineage>
        <taxon>Bacteria</taxon>
        <taxon>Pseudomonadati</taxon>
        <taxon>Pseudomonadota</taxon>
        <taxon>Gammaproteobacteria</taxon>
        <taxon>Alteromonadales</taxon>
        <taxon>Shewanellaceae</taxon>
        <taxon>Shewanella</taxon>
    </lineage>
</organism>
<name>RS15_SHEWM</name>
<feature type="chain" id="PRO_1000143171" description="Small ribosomal subunit protein uS15">
    <location>
        <begin position="1"/>
        <end position="89"/>
    </location>
</feature>
<evidence type="ECO:0000255" key="1">
    <source>
        <dbReference type="HAMAP-Rule" id="MF_01343"/>
    </source>
</evidence>
<evidence type="ECO:0000305" key="2"/>
<protein>
    <recommendedName>
        <fullName evidence="1">Small ribosomal subunit protein uS15</fullName>
    </recommendedName>
    <alternativeName>
        <fullName evidence="2">30S ribosomal protein S15</fullName>
    </alternativeName>
</protein>
<reference key="1">
    <citation type="submission" date="2008-02" db="EMBL/GenBank/DDBJ databases">
        <title>Complete sequence of Shewanella woodyi ATCC 51908.</title>
        <authorList>
            <consortium name="US DOE Joint Genome Institute"/>
            <person name="Copeland A."/>
            <person name="Lucas S."/>
            <person name="Lapidus A."/>
            <person name="Glavina del Rio T."/>
            <person name="Dalin E."/>
            <person name="Tice H."/>
            <person name="Bruce D."/>
            <person name="Goodwin L."/>
            <person name="Pitluck S."/>
            <person name="Sims D."/>
            <person name="Brettin T."/>
            <person name="Detter J.C."/>
            <person name="Han C."/>
            <person name="Kuske C.R."/>
            <person name="Schmutz J."/>
            <person name="Larimer F."/>
            <person name="Land M."/>
            <person name="Hauser L."/>
            <person name="Kyrpides N."/>
            <person name="Lykidis A."/>
            <person name="Zhao J.-S."/>
            <person name="Richardson P."/>
        </authorList>
    </citation>
    <scope>NUCLEOTIDE SEQUENCE [LARGE SCALE GENOMIC DNA]</scope>
    <source>
        <strain>ATCC 51908 / MS32</strain>
    </source>
</reference>